<comment type="function">
    <text evidence="1">Catalyzes the reversible reaction in which hydroxymethyl group from 5,10-methylenetetrahydrofolate is transferred onto alpha-ketoisovalerate to form ketopantoate.</text>
</comment>
<comment type="catalytic activity">
    <reaction evidence="1">
        <text>3-methyl-2-oxobutanoate + (6R)-5,10-methylene-5,6,7,8-tetrahydrofolate + H2O = 2-dehydropantoate + (6S)-5,6,7,8-tetrahydrofolate</text>
        <dbReference type="Rhea" id="RHEA:11824"/>
        <dbReference type="ChEBI" id="CHEBI:11561"/>
        <dbReference type="ChEBI" id="CHEBI:11851"/>
        <dbReference type="ChEBI" id="CHEBI:15377"/>
        <dbReference type="ChEBI" id="CHEBI:15636"/>
        <dbReference type="ChEBI" id="CHEBI:57453"/>
        <dbReference type="EC" id="2.1.2.11"/>
    </reaction>
</comment>
<comment type="cofactor">
    <cofactor evidence="1">
        <name>Mg(2+)</name>
        <dbReference type="ChEBI" id="CHEBI:18420"/>
    </cofactor>
    <text evidence="1">Binds 1 Mg(2+) ion per subunit.</text>
</comment>
<comment type="pathway">
    <text evidence="1">Cofactor biosynthesis; (R)-pantothenate biosynthesis; (R)-pantoate from 3-methyl-2-oxobutanoate: step 1/2.</text>
</comment>
<comment type="subunit">
    <text evidence="1">Homodecamer; pentamer of dimers.</text>
</comment>
<comment type="subcellular location">
    <subcellularLocation>
        <location evidence="1">Cytoplasm</location>
    </subcellularLocation>
</comment>
<comment type="similarity">
    <text evidence="1">Belongs to the PanB family.</text>
</comment>
<reference key="1">
    <citation type="journal article" date="2004" name="Nat. Genet.">
        <title>Comparison of genome degradation in Paratyphi A and Typhi, human-restricted serovars of Salmonella enterica that cause typhoid.</title>
        <authorList>
            <person name="McClelland M."/>
            <person name="Sanderson K.E."/>
            <person name="Clifton S.W."/>
            <person name="Latreille P."/>
            <person name="Porwollik S."/>
            <person name="Sabo A."/>
            <person name="Meyer R."/>
            <person name="Bieri T."/>
            <person name="Ozersky P."/>
            <person name="McLellan M."/>
            <person name="Harkins C.R."/>
            <person name="Wang C."/>
            <person name="Nguyen C."/>
            <person name="Berghoff A."/>
            <person name="Elliott G."/>
            <person name="Kohlberg S."/>
            <person name="Strong C."/>
            <person name="Du F."/>
            <person name="Carter J."/>
            <person name="Kremizki C."/>
            <person name="Layman D."/>
            <person name="Leonard S."/>
            <person name="Sun H."/>
            <person name="Fulton L."/>
            <person name="Nash W."/>
            <person name="Miner T."/>
            <person name="Minx P."/>
            <person name="Delehaunty K."/>
            <person name="Fronick C."/>
            <person name="Magrini V."/>
            <person name="Nhan M."/>
            <person name="Warren W."/>
            <person name="Florea L."/>
            <person name="Spieth J."/>
            <person name="Wilson R.K."/>
        </authorList>
    </citation>
    <scope>NUCLEOTIDE SEQUENCE [LARGE SCALE GENOMIC DNA]</scope>
    <source>
        <strain>ATCC 9150 / SARB42</strain>
    </source>
</reference>
<proteinExistence type="inferred from homology"/>
<keyword id="KW-0963">Cytoplasm</keyword>
<keyword id="KW-0460">Magnesium</keyword>
<keyword id="KW-0479">Metal-binding</keyword>
<keyword id="KW-0566">Pantothenate biosynthesis</keyword>
<keyword id="KW-0808">Transferase</keyword>
<accession>Q5PIN3</accession>
<dbReference type="EC" id="2.1.2.11" evidence="1"/>
<dbReference type="EMBL" id="CP000026">
    <property type="protein sequence ID" value="AAV76221.1"/>
    <property type="molecule type" value="Genomic_DNA"/>
</dbReference>
<dbReference type="RefSeq" id="WP_000805487.1">
    <property type="nucleotide sequence ID" value="NC_006511.1"/>
</dbReference>
<dbReference type="SMR" id="Q5PIN3"/>
<dbReference type="KEGG" id="spt:SPA0188"/>
<dbReference type="HOGENOM" id="CLU_036645_1_0_6"/>
<dbReference type="UniPathway" id="UPA00028">
    <property type="reaction ID" value="UER00003"/>
</dbReference>
<dbReference type="Proteomes" id="UP000008185">
    <property type="component" value="Chromosome"/>
</dbReference>
<dbReference type="GO" id="GO:0005737">
    <property type="term" value="C:cytoplasm"/>
    <property type="evidence" value="ECO:0007669"/>
    <property type="project" value="UniProtKB-SubCell"/>
</dbReference>
<dbReference type="GO" id="GO:0003864">
    <property type="term" value="F:3-methyl-2-oxobutanoate hydroxymethyltransferase activity"/>
    <property type="evidence" value="ECO:0007669"/>
    <property type="project" value="UniProtKB-UniRule"/>
</dbReference>
<dbReference type="GO" id="GO:0000287">
    <property type="term" value="F:magnesium ion binding"/>
    <property type="evidence" value="ECO:0007669"/>
    <property type="project" value="TreeGrafter"/>
</dbReference>
<dbReference type="GO" id="GO:0015940">
    <property type="term" value="P:pantothenate biosynthetic process"/>
    <property type="evidence" value="ECO:0007669"/>
    <property type="project" value="UniProtKB-UniRule"/>
</dbReference>
<dbReference type="CDD" id="cd06557">
    <property type="entry name" value="KPHMT-like"/>
    <property type="match status" value="1"/>
</dbReference>
<dbReference type="FunFam" id="3.20.20.60:FF:000003">
    <property type="entry name" value="3-methyl-2-oxobutanoate hydroxymethyltransferase"/>
    <property type="match status" value="1"/>
</dbReference>
<dbReference type="Gene3D" id="3.20.20.60">
    <property type="entry name" value="Phosphoenolpyruvate-binding domains"/>
    <property type="match status" value="1"/>
</dbReference>
<dbReference type="HAMAP" id="MF_00156">
    <property type="entry name" value="PanB"/>
    <property type="match status" value="1"/>
</dbReference>
<dbReference type="InterPro" id="IPR003700">
    <property type="entry name" value="Pantoate_hydroxy_MeTrfase"/>
</dbReference>
<dbReference type="InterPro" id="IPR015813">
    <property type="entry name" value="Pyrv/PenolPyrv_kinase-like_dom"/>
</dbReference>
<dbReference type="InterPro" id="IPR040442">
    <property type="entry name" value="Pyrv_kinase-like_dom_sf"/>
</dbReference>
<dbReference type="NCBIfam" id="TIGR00222">
    <property type="entry name" value="panB"/>
    <property type="match status" value="1"/>
</dbReference>
<dbReference type="NCBIfam" id="NF001452">
    <property type="entry name" value="PRK00311.1"/>
    <property type="match status" value="1"/>
</dbReference>
<dbReference type="PANTHER" id="PTHR20881">
    <property type="entry name" value="3-METHYL-2-OXOBUTANOATE HYDROXYMETHYLTRANSFERASE"/>
    <property type="match status" value="1"/>
</dbReference>
<dbReference type="PANTHER" id="PTHR20881:SF0">
    <property type="entry name" value="3-METHYL-2-OXOBUTANOATE HYDROXYMETHYLTRANSFERASE"/>
    <property type="match status" value="1"/>
</dbReference>
<dbReference type="Pfam" id="PF02548">
    <property type="entry name" value="Pantoate_transf"/>
    <property type="match status" value="1"/>
</dbReference>
<dbReference type="PIRSF" id="PIRSF000388">
    <property type="entry name" value="Pantoate_hydroxy_MeTrfase"/>
    <property type="match status" value="1"/>
</dbReference>
<dbReference type="SUPFAM" id="SSF51621">
    <property type="entry name" value="Phosphoenolpyruvate/pyruvate domain"/>
    <property type="match status" value="1"/>
</dbReference>
<protein>
    <recommendedName>
        <fullName evidence="1">3-methyl-2-oxobutanoate hydroxymethyltransferase</fullName>
        <ecNumber evidence="1">2.1.2.11</ecNumber>
    </recommendedName>
    <alternativeName>
        <fullName evidence="1">Ketopantoate hydroxymethyltransferase</fullName>
        <shortName evidence="1">KPHMT</shortName>
    </alternativeName>
</protein>
<feature type="chain" id="PRO_0000297366" description="3-methyl-2-oxobutanoate hydroxymethyltransferase">
    <location>
        <begin position="1"/>
        <end position="263"/>
    </location>
</feature>
<feature type="active site" description="Proton acceptor" evidence="1">
    <location>
        <position position="180"/>
    </location>
</feature>
<feature type="binding site" evidence="1">
    <location>
        <begin position="45"/>
        <end position="46"/>
    </location>
    <ligand>
        <name>3-methyl-2-oxobutanoate</name>
        <dbReference type="ChEBI" id="CHEBI:11851"/>
    </ligand>
</feature>
<feature type="binding site" evidence="1">
    <location>
        <position position="45"/>
    </location>
    <ligand>
        <name>Mg(2+)</name>
        <dbReference type="ChEBI" id="CHEBI:18420"/>
    </ligand>
</feature>
<feature type="binding site" evidence="1">
    <location>
        <position position="84"/>
    </location>
    <ligand>
        <name>3-methyl-2-oxobutanoate</name>
        <dbReference type="ChEBI" id="CHEBI:11851"/>
    </ligand>
</feature>
<feature type="binding site" evidence="1">
    <location>
        <position position="84"/>
    </location>
    <ligand>
        <name>Mg(2+)</name>
        <dbReference type="ChEBI" id="CHEBI:18420"/>
    </ligand>
</feature>
<feature type="binding site" evidence="1">
    <location>
        <position position="112"/>
    </location>
    <ligand>
        <name>3-methyl-2-oxobutanoate</name>
        <dbReference type="ChEBI" id="CHEBI:11851"/>
    </ligand>
</feature>
<feature type="binding site" evidence="1">
    <location>
        <position position="114"/>
    </location>
    <ligand>
        <name>Mg(2+)</name>
        <dbReference type="ChEBI" id="CHEBI:18420"/>
    </ligand>
</feature>
<gene>
    <name evidence="1" type="primary">panB</name>
    <name type="ordered locus">SPA0188</name>
</gene>
<evidence type="ECO:0000255" key="1">
    <source>
        <dbReference type="HAMAP-Rule" id="MF_00156"/>
    </source>
</evidence>
<sequence length="263" mass="28105">MKPTTISLLQKCKQEKKRFATITAYDYSFAKLFADEGINVMLVGDSLGMTIQGHDSTLPVTVEDIAYHTRAVRRGAPNCLLLSDLPFMAYATPEQACENAAIVMRAGANMVKIEGGAWLVDTVKMLTERAVPVCGHLGLTPQSVNIFGGYKIQGRGDAGQVLLDDALALEAAGAQLLVLECVPVELAKRVTEALSIPVIGIGAGNVTDGQILVMHDAFGITGGHIPKFAKNFLAEAGDMRAAVQQYMAEVESGVYPGEEHSFH</sequence>
<name>PANB_SALPA</name>
<organism>
    <name type="scientific">Salmonella paratyphi A (strain ATCC 9150 / SARB42)</name>
    <dbReference type="NCBI Taxonomy" id="295319"/>
    <lineage>
        <taxon>Bacteria</taxon>
        <taxon>Pseudomonadati</taxon>
        <taxon>Pseudomonadota</taxon>
        <taxon>Gammaproteobacteria</taxon>
        <taxon>Enterobacterales</taxon>
        <taxon>Enterobacteriaceae</taxon>
        <taxon>Salmonella</taxon>
    </lineage>
</organism>